<reference key="1">
    <citation type="journal article" date="2006" name="Nat. Biotechnol.">
        <title>Complete genome of the mutualistic, N2-fixing grass endophyte Azoarcus sp. strain BH72.</title>
        <authorList>
            <person name="Krause A."/>
            <person name="Ramakumar A."/>
            <person name="Bartels D."/>
            <person name="Battistoni F."/>
            <person name="Bekel T."/>
            <person name="Boch J."/>
            <person name="Boehm M."/>
            <person name="Friedrich F."/>
            <person name="Hurek T."/>
            <person name="Krause L."/>
            <person name="Linke B."/>
            <person name="McHardy A.C."/>
            <person name="Sarkar A."/>
            <person name="Schneiker S."/>
            <person name="Syed A.A."/>
            <person name="Thauer R."/>
            <person name="Vorhoelter F.-J."/>
            <person name="Weidner S."/>
            <person name="Puehler A."/>
            <person name="Reinhold-Hurek B."/>
            <person name="Kaiser O."/>
            <person name="Goesmann A."/>
        </authorList>
    </citation>
    <scope>NUCLEOTIDE SEQUENCE [LARGE SCALE GENOMIC DNA]</scope>
    <source>
        <strain>BH72</strain>
    </source>
</reference>
<evidence type="ECO:0000255" key="1">
    <source>
        <dbReference type="HAMAP-Rule" id="MF_00340"/>
    </source>
</evidence>
<evidence type="ECO:0000256" key="2">
    <source>
        <dbReference type="SAM" id="MobiDB-lite"/>
    </source>
</evidence>
<evidence type="ECO:0000305" key="3"/>
<organism>
    <name type="scientific">Azoarcus sp. (strain BH72)</name>
    <dbReference type="NCBI Taxonomy" id="418699"/>
    <lineage>
        <taxon>Bacteria</taxon>
        <taxon>Pseudomonadati</taxon>
        <taxon>Pseudomonadota</taxon>
        <taxon>Betaproteobacteria</taxon>
        <taxon>Rhodocyclales</taxon>
        <taxon>Zoogloeaceae</taxon>
        <taxon>Azoarcus</taxon>
    </lineage>
</organism>
<proteinExistence type="inferred from homology"/>
<dbReference type="EMBL" id="AM406670">
    <property type="protein sequence ID" value="CAL94238.1"/>
    <property type="molecule type" value="Genomic_DNA"/>
</dbReference>
<dbReference type="RefSeq" id="WP_011765354.1">
    <property type="nucleotide sequence ID" value="NC_008702.1"/>
</dbReference>
<dbReference type="SMR" id="A1K5Y3"/>
<dbReference type="STRING" id="62928.azo1621"/>
<dbReference type="KEGG" id="aoa:dqs_1746"/>
<dbReference type="KEGG" id="azo:azo1621"/>
<dbReference type="eggNOG" id="COG0333">
    <property type="taxonomic scope" value="Bacteria"/>
</dbReference>
<dbReference type="HOGENOM" id="CLU_129084_2_1_4"/>
<dbReference type="OrthoDB" id="9801927at2"/>
<dbReference type="Proteomes" id="UP000002588">
    <property type="component" value="Chromosome"/>
</dbReference>
<dbReference type="GO" id="GO:0015934">
    <property type="term" value="C:large ribosomal subunit"/>
    <property type="evidence" value="ECO:0007669"/>
    <property type="project" value="InterPro"/>
</dbReference>
<dbReference type="GO" id="GO:0003735">
    <property type="term" value="F:structural constituent of ribosome"/>
    <property type="evidence" value="ECO:0007669"/>
    <property type="project" value="InterPro"/>
</dbReference>
<dbReference type="GO" id="GO:0006412">
    <property type="term" value="P:translation"/>
    <property type="evidence" value="ECO:0007669"/>
    <property type="project" value="UniProtKB-UniRule"/>
</dbReference>
<dbReference type="HAMAP" id="MF_00340">
    <property type="entry name" value="Ribosomal_bL32"/>
    <property type="match status" value="1"/>
</dbReference>
<dbReference type="InterPro" id="IPR002677">
    <property type="entry name" value="Ribosomal_bL32"/>
</dbReference>
<dbReference type="InterPro" id="IPR044957">
    <property type="entry name" value="Ribosomal_bL32_bact"/>
</dbReference>
<dbReference type="InterPro" id="IPR011332">
    <property type="entry name" value="Ribosomal_zn-bd"/>
</dbReference>
<dbReference type="NCBIfam" id="TIGR01031">
    <property type="entry name" value="rpmF_bact"/>
    <property type="match status" value="1"/>
</dbReference>
<dbReference type="PANTHER" id="PTHR35534">
    <property type="entry name" value="50S RIBOSOMAL PROTEIN L32"/>
    <property type="match status" value="1"/>
</dbReference>
<dbReference type="PANTHER" id="PTHR35534:SF1">
    <property type="entry name" value="LARGE RIBOSOMAL SUBUNIT PROTEIN BL32"/>
    <property type="match status" value="1"/>
</dbReference>
<dbReference type="Pfam" id="PF01783">
    <property type="entry name" value="Ribosomal_L32p"/>
    <property type="match status" value="1"/>
</dbReference>
<dbReference type="SUPFAM" id="SSF57829">
    <property type="entry name" value="Zn-binding ribosomal proteins"/>
    <property type="match status" value="1"/>
</dbReference>
<protein>
    <recommendedName>
        <fullName evidence="1">Large ribosomal subunit protein bL32</fullName>
    </recommendedName>
    <alternativeName>
        <fullName evidence="3">50S ribosomal protein L32</fullName>
    </alternativeName>
</protein>
<keyword id="KW-1185">Reference proteome</keyword>
<keyword id="KW-0687">Ribonucleoprotein</keyword>
<keyword id="KW-0689">Ribosomal protein</keyword>
<accession>A1K5Y3</accession>
<sequence length="59" mass="6562">MAVQQNKKSPSKRGMHRAHDFLTAPSLAVEPTTGEVHLRHHISPNGFYRGKKVVKAKGE</sequence>
<name>RL32_AZOSB</name>
<comment type="similarity">
    <text evidence="1">Belongs to the bacterial ribosomal protein bL32 family.</text>
</comment>
<feature type="chain" id="PRO_0000296424" description="Large ribosomal subunit protein bL32">
    <location>
        <begin position="1"/>
        <end position="59"/>
    </location>
</feature>
<feature type="region of interest" description="Disordered" evidence="2">
    <location>
        <begin position="1"/>
        <end position="25"/>
    </location>
</feature>
<gene>
    <name evidence="1" type="primary">rpmF</name>
    <name type="ordered locus">azo1621</name>
</gene>